<proteinExistence type="inferred from homology"/>
<gene>
    <name type="primary">MED31</name>
    <name type="ORF">AAEL004132</name>
</gene>
<sequence length="218" mass="24145">MANKMVGKGKLPVESEDAQKLRFQAELEFVQCLANPNYLHFLAQRGFFKDSNFINYLKYLLHWKDPEMAKYLKYPMCLYFLDLLQYEHFRREIVNAQCCKFIDDQAILLWQHYTRRRTRLTSLGTTSLTGLAVGGQPVGGGVQGPLLSNEPLPMANNNNNTNSTNANNPQAPGQQQQQNGAPMIQQNGLSNNTGMSGGVMGSGARDGGGVNLSGQKVS</sequence>
<keyword id="KW-0010">Activator</keyword>
<keyword id="KW-0025">Alternative splicing</keyword>
<keyword id="KW-0539">Nucleus</keyword>
<keyword id="KW-1185">Reference proteome</keyword>
<keyword id="KW-0804">Transcription</keyword>
<keyword id="KW-0805">Transcription regulation</keyword>
<name>MED31_AEDAE</name>
<reference key="1">
    <citation type="journal article" date="2007" name="Science">
        <title>Genome sequence of Aedes aegypti, a major arbovirus vector.</title>
        <authorList>
            <person name="Nene V."/>
            <person name="Wortman J.R."/>
            <person name="Lawson D."/>
            <person name="Haas B.J."/>
            <person name="Kodira C.D."/>
            <person name="Tu Z.J."/>
            <person name="Loftus B.J."/>
            <person name="Xi Z."/>
            <person name="Megy K."/>
            <person name="Grabherr M."/>
            <person name="Ren Q."/>
            <person name="Zdobnov E.M."/>
            <person name="Lobo N.F."/>
            <person name="Campbell K.S."/>
            <person name="Brown S.E."/>
            <person name="Bonaldo M.F."/>
            <person name="Zhu J."/>
            <person name="Sinkins S.P."/>
            <person name="Hogenkamp D.G."/>
            <person name="Amedeo P."/>
            <person name="Arensburger P."/>
            <person name="Atkinson P.W."/>
            <person name="Bidwell S.L."/>
            <person name="Biedler J."/>
            <person name="Birney E."/>
            <person name="Bruggner R.V."/>
            <person name="Costas J."/>
            <person name="Coy M.R."/>
            <person name="Crabtree J."/>
            <person name="Crawford M."/>
            <person name="DeBruyn B."/>
            <person name="DeCaprio D."/>
            <person name="Eiglmeier K."/>
            <person name="Eisenstadt E."/>
            <person name="El-Dorry H."/>
            <person name="Gelbart W.M."/>
            <person name="Gomes S.L."/>
            <person name="Hammond M."/>
            <person name="Hannick L.I."/>
            <person name="Hogan J.R."/>
            <person name="Holmes M.H."/>
            <person name="Jaffe D."/>
            <person name="Johnston S.J."/>
            <person name="Kennedy R.C."/>
            <person name="Koo H."/>
            <person name="Kravitz S."/>
            <person name="Kriventseva E.V."/>
            <person name="Kulp D."/>
            <person name="Labutti K."/>
            <person name="Lee E."/>
            <person name="Li S."/>
            <person name="Lovin D.D."/>
            <person name="Mao C."/>
            <person name="Mauceli E."/>
            <person name="Menck C.F."/>
            <person name="Miller J.R."/>
            <person name="Montgomery P."/>
            <person name="Mori A."/>
            <person name="Nascimento A.L."/>
            <person name="Naveira H.F."/>
            <person name="Nusbaum C."/>
            <person name="O'Leary S.B."/>
            <person name="Orvis J."/>
            <person name="Pertea M."/>
            <person name="Quesneville H."/>
            <person name="Reidenbach K.R."/>
            <person name="Rogers Y.-H.C."/>
            <person name="Roth C.W."/>
            <person name="Schneider J.R."/>
            <person name="Schatz M."/>
            <person name="Shumway M."/>
            <person name="Stanke M."/>
            <person name="Stinson E.O."/>
            <person name="Tubio J.M.C."/>
            <person name="Vanzee J.P."/>
            <person name="Verjovski-Almeida S."/>
            <person name="Werner D."/>
            <person name="White O.R."/>
            <person name="Wyder S."/>
            <person name="Zeng Q."/>
            <person name="Zhao Q."/>
            <person name="Zhao Y."/>
            <person name="Hill C.A."/>
            <person name="Raikhel A.S."/>
            <person name="Soares M.B."/>
            <person name="Knudson D.L."/>
            <person name="Lee N.H."/>
            <person name="Galagan J."/>
            <person name="Salzberg S.L."/>
            <person name="Paulsen I.T."/>
            <person name="Dimopoulos G."/>
            <person name="Collins F.H."/>
            <person name="Bruce B."/>
            <person name="Fraser-Liggett C.M."/>
            <person name="Severson D.W."/>
        </authorList>
    </citation>
    <scope>NUCLEOTIDE SEQUENCE [LARGE SCALE GENOMIC DNA]</scope>
    <source>
        <strain>LVPib12</strain>
    </source>
</reference>
<protein>
    <recommendedName>
        <fullName>Mediator of RNA polymerase II transcription subunit 31</fullName>
    </recommendedName>
    <alternativeName>
        <fullName>Mediator complex subunit 31</fullName>
    </alternativeName>
</protein>
<comment type="function">
    <text evidence="1">Component of the Mediator complex, a coactivator involved in the regulated transcription of nearly all RNA polymerase II-dependent genes. Mediator functions as a bridge to convey information from gene-specific regulatory proteins to the basal RNA polymerase II transcription machinery. Mediator is recruited to promoters by direct interactions with regulatory proteins and serves as a scaffold for the assembly of a functional preinitiation complex with RNA polymerase II and the general transcription factors (By similarity).</text>
</comment>
<comment type="subunit">
    <text evidence="1">Component of the Mediator complex.</text>
</comment>
<comment type="subcellular location">
    <subcellularLocation>
        <location evidence="3">Nucleus</location>
    </subcellularLocation>
</comment>
<comment type="alternative products">
    <event type="alternative splicing"/>
    <isoform>
        <id>Q17DI7-1</id>
        <name>1</name>
        <sequence type="displayed"/>
    </isoform>
    <isoform>
        <id>Q17DI7-2</id>
        <name>2</name>
        <sequence type="described" ref="VSP_028350"/>
    </isoform>
</comment>
<comment type="similarity">
    <text evidence="3">Belongs to the Mediator complex subunit 31 family.</text>
</comment>
<organism>
    <name type="scientific">Aedes aegypti</name>
    <name type="common">Yellowfever mosquito</name>
    <name type="synonym">Culex aegypti</name>
    <dbReference type="NCBI Taxonomy" id="7159"/>
    <lineage>
        <taxon>Eukaryota</taxon>
        <taxon>Metazoa</taxon>
        <taxon>Ecdysozoa</taxon>
        <taxon>Arthropoda</taxon>
        <taxon>Hexapoda</taxon>
        <taxon>Insecta</taxon>
        <taxon>Pterygota</taxon>
        <taxon>Neoptera</taxon>
        <taxon>Endopterygota</taxon>
        <taxon>Diptera</taxon>
        <taxon>Nematocera</taxon>
        <taxon>Culicoidea</taxon>
        <taxon>Culicidae</taxon>
        <taxon>Culicinae</taxon>
        <taxon>Aedini</taxon>
        <taxon>Aedes</taxon>
        <taxon>Stegomyia</taxon>
    </lineage>
</organism>
<accession>Q17DI7</accession>
<accession>J9E9I4</accession>
<accession>Q17DI8</accession>
<evidence type="ECO:0000250" key="1"/>
<evidence type="ECO:0000256" key="2">
    <source>
        <dbReference type="SAM" id="MobiDB-lite"/>
    </source>
</evidence>
<evidence type="ECO:0000305" key="3"/>
<dbReference type="EMBL" id="CH477293">
    <property type="protein sequence ID" value="EAT44515.1"/>
    <property type="molecule type" value="Genomic_DNA"/>
</dbReference>
<dbReference type="EMBL" id="CH477293">
    <property type="protein sequence ID" value="EAT44516.1"/>
    <property type="molecule type" value="Genomic_DNA"/>
</dbReference>
<dbReference type="EMBL" id="CH477293">
    <property type="protein sequence ID" value="EAT44517.1"/>
    <property type="molecule type" value="Genomic_DNA"/>
</dbReference>
<dbReference type="EMBL" id="CH477293">
    <property type="protein sequence ID" value="EJY57516.1"/>
    <property type="molecule type" value="Genomic_DNA"/>
</dbReference>
<dbReference type="RefSeq" id="XP_001648517.1">
    <property type="nucleotide sequence ID" value="XM_001648467.1"/>
</dbReference>
<dbReference type="RefSeq" id="XP_001648518.1">
    <property type="nucleotide sequence ID" value="XM_001648468.1"/>
</dbReference>
<dbReference type="RefSeq" id="XP_001648519.1">
    <property type="nucleotide sequence ID" value="XM_001648469.1"/>
</dbReference>
<dbReference type="RefSeq" id="XP_011493225.1">
    <property type="nucleotide sequence ID" value="XM_011494923.1"/>
</dbReference>
<dbReference type="SMR" id="Q17DI7"/>
<dbReference type="FunCoup" id="Q17DI7">
    <property type="interactions" value="1848"/>
</dbReference>
<dbReference type="STRING" id="7159.Q17DI7"/>
<dbReference type="PaxDb" id="7159-AAEL004132-PC"/>
<dbReference type="GeneID" id="5564178"/>
<dbReference type="KEGG" id="aag:5564178"/>
<dbReference type="CTD" id="51003"/>
<dbReference type="VEuPathDB" id="VectorBase:AAEL004132"/>
<dbReference type="eggNOG" id="KOG4086">
    <property type="taxonomic scope" value="Eukaryota"/>
</dbReference>
<dbReference type="InParanoid" id="Q17DI7"/>
<dbReference type="OrthoDB" id="10257739at2759"/>
<dbReference type="PhylomeDB" id="Q17DI7"/>
<dbReference type="Proteomes" id="UP000008820">
    <property type="component" value="Unassembled WGS sequence"/>
</dbReference>
<dbReference type="Proteomes" id="UP000682892">
    <property type="component" value="Unassembled WGS sequence"/>
</dbReference>
<dbReference type="GO" id="GO:0016592">
    <property type="term" value="C:mediator complex"/>
    <property type="evidence" value="ECO:0007669"/>
    <property type="project" value="InterPro"/>
</dbReference>
<dbReference type="GO" id="GO:0003712">
    <property type="term" value="F:transcription coregulator activity"/>
    <property type="evidence" value="ECO:0007669"/>
    <property type="project" value="InterPro"/>
</dbReference>
<dbReference type="GO" id="GO:0006355">
    <property type="term" value="P:regulation of DNA-templated transcription"/>
    <property type="evidence" value="ECO:0007669"/>
    <property type="project" value="InterPro"/>
</dbReference>
<dbReference type="FunFam" id="1.10.10.1340:FF:000001">
    <property type="entry name" value="Mediator of RNA polymerase II transcription subunit 31"/>
    <property type="match status" value="1"/>
</dbReference>
<dbReference type="Gene3D" id="1.10.10.1340">
    <property type="entry name" value="Mediator of RNA polymerase II, submodule Med31 (Soh1)"/>
    <property type="match status" value="1"/>
</dbReference>
<dbReference type="InterPro" id="IPR038089">
    <property type="entry name" value="Med31_sf"/>
</dbReference>
<dbReference type="InterPro" id="IPR008831">
    <property type="entry name" value="Mediator_Med31"/>
</dbReference>
<dbReference type="PANTHER" id="PTHR13186">
    <property type="entry name" value="MEDIATOR OF RNA POLYMERASE II TRANSCRIPTION SUBUNIT 31"/>
    <property type="match status" value="1"/>
</dbReference>
<dbReference type="Pfam" id="PF05669">
    <property type="entry name" value="Med31"/>
    <property type="match status" value="1"/>
</dbReference>
<feature type="chain" id="PRO_0000305713" description="Mediator of RNA polymerase II transcription subunit 31">
    <location>
        <begin position="1"/>
        <end position="218"/>
    </location>
</feature>
<feature type="region of interest" description="Disordered" evidence="2">
    <location>
        <begin position="142"/>
        <end position="218"/>
    </location>
</feature>
<feature type="compositionally biased region" description="Low complexity" evidence="2">
    <location>
        <begin position="155"/>
        <end position="187"/>
    </location>
</feature>
<feature type="compositionally biased region" description="Gly residues" evidence="2">
    <location>
        <begin position="195"/>
        <end position="211"/>
    </location>
</feature>
<feature type="splice variant" id="VSP_028350" description="In isoform 2." evidence="3">
    <original>MANKMVGKGK</original>
    <variation>MSAYG</variation>
    <location>
        <begin position="1"/>
        <end position="10"/>
    </location>
</feature>